<evidence type="ECO:0000250" key="1">
    <source>
        <dbReference type="UniProtKB" id="P62277"/>
    </source>
</evidence>
<evidence type="ECO:0000250" key="2">
    <source>
        <dbReference type="UniProtKB" id="P62301"/>
    </source>
</evidence>
<evidence type="ECO:0000305" key="3"/>
<sequence length="151" mass="17222">MGRMHAPGKGLSQSALPYRRSVPTWLKLTSDDVKEQIYKLAKKGLTPSQIGVILRDSHGVAQVRFVTGNKILRILKSKGLAPDLPEDLYHLIKKAVAVRKHLERNRKDKDAKFRLILIESRIHRLARYYKTKRVLPPNWKYESSTASALVA</sequence>
<accession>Q56JX8</accession>
<keyword id="KW-0007">Acetylation</keyword>
<keyword id="KW-0963">Cytoplasm</keyword>
<keyword id="KW-1017">Isopeptide bond</keyword>
<keyword id="KW-0539">Nucleus</keyword>
<keyword id="KW-0597">Phosphoprotein</keyword>
<keyword id="KW-1185">Reference proteome</keyword>
<keyword id="KW-0687">Ribonucleoprotein</keyword>
<keyword id="KW-0689">Ribosomal protein</keyword>
<keyword id="KW-0832">Ubl conjugation</keyword>
<protein>
    <recommendedName>
        <fullName evidence="3">Small ribosomal subunit protein uS15</fullName>
    </recommendedName>
    <alternativeName>
        <fullName>40S ribosomal protein S13</fullName>
    </alternativeName>
</protein>
<comment type="function">
    <text evidence="1">Component of the small ribosomal subunit. The ribosome is a large ribonucleoprotein complex responsible for the synthesis of proteins in the cell. Part of the small subunit (SSU) processome, first precursor of the small eukaryotic ribosomal subunit. During the assembly of the SSU processome in the nucleolus, many ribosome biogenesis factors, an RNA chaperone and ribosomal proteins associate with the nascent pre-rRNA and work in concert to generate RNA folding, modifications, rearrangements and cleavage as well as targeted degradation of pre-ribosomal RNA by the RNA exosome.</text>
</comment>
<comment type="subunit">
    <text evidence="1">Component of the small ribosomal subunit. Part of the small subunit (SSU) processome, composed of more than 70 proteins and the RNA chaperone small nucleolar RNA (snoRNA) U3.</text>
</comment>
<comment type="subcellular location">
    <subcellularLocation>
        <location evidence="1">Cytoplasm</location>
    </subcellularLocation>
    <subcellularLocation>
        <location evidence="1">Nucleus</location>
        <location evidence="1">Nucleolus</location>
    </subcellularLocation>
</comment>
<comment type="PTM">
    <text evidence="1">Ubiquitinated at Lys-27 by RNF14 and RNF25 in response to ribosome collisions (ribosome stalling).</text>
</comment>
<comment type="similarity">
    <text evidence="3">Belongs to the universal ribosomal protein uS15 family.</text>
</comment>
<feature type="chain" id="PRO_0000231592" description="Small ribosomal subunit protein uS15">
    <location>
        <begin position="1"/>
        <end position="151"/>
    </location>
</feature>
<feature type="modified residue" description="N6-acetyllysine; alternate" evidence="1">
    <location>
        <position position="27"/>
    </location>
</feature>
<feature type="modified residue" description="N6-succinyllysine; alternate" evidence="2">
    <location>
        <position position="27"/>
    </location>
</feature>
<feature type="modified residue" description="Phosphoserine" evidence="1">
    <location>
        <position position="30"/>
    </location>
</feature>
<feature type="modified residue" description="N6-succinyllysine" evidence="2">
    <location>
        <position position="34"/>
    </location>
</feature>
<feature type="modified residue" description="Phosphotyrosine" evidence="1">
    <location>
        <position position="38"/>
    </location>
</feature>
<feature type="cross-link" description="Glycyl lysine isopeptide (Lys-Gly) (interchain with G-Cter in ubiquitin)" evidence="1">
    <location>
        <position position="27"/>
    </location>
</feature>
<feature type="cross-link" description="Glycyl lysine isopeptide (Lys-Gly) (interchain with G-Cter in SUMO2)" evidence="1">
    <location>
        <position position="43"/>
    </location>
</feature>
<name>RS13_BOVIN</name>
<organism>
    <name type="scientific">Bos taurus</name>
    <name type="common">Bovine</name>
    <dbReference type="NCBI Taxonomy" id="9913"/>
    <lineage>
        <taxon>Eukaryota</taxon>
        <taxon>Metazoa</taxon>
        <taxon>Chordata</taxon>
        <taxon>Craniata</taxon>
        <taxon>Vertebrata</taxon>
        <taxon>Euteleostomi</taxon>
        <taxon>Mammalia</taxon>
        <taxon>Eutheria</taxon>
        <taxon>Laurasiatheria</taxon>
        <taxon>Artiodactyla</taxon>
        <taxon>Ruminantia</taxon>
        <taxon>Pecora</taxon>
        <taxon>Bovidae</taxon>
        <taxon>Bovinae</taxon>
        <taxon>Bos</taxon>
    </lineage>
</organism>
<gene>
    <name type="primary">RPS13</name>
</gene>
<reference key="1">
    <citation type="submission" date="2005-01" db="EMBL/GenBank/DDBJ databases">
        <title>Analysis of sequences obtained from constructed full-length bovine cDNA libraries.</title>
        <authorList>
            <person name="Yu J."/>
            <person name="Meng Y."/>
            <person name="Wang Z."/>
            <person name="Hansen C."/>
            <person name="Li C."/>
            <person name="Moore S.S."/>
        </authorList>
    </citation>
    <scope>NUCLEOTIDE SEQUENCE [LARGE SCALE MRNA]</scope>
    <source>
        <tissue>Lymphoid epithelium</tissue>
    </source>
</reference>
<reference key="2">
    <citation type="submission" date="2005-08" db="EMBL/GenBank/DDBJ databases">
        <authorList>
            <consortium name="NIH - Mammalian Gene Collection (MGC) project"/>
        </authorList>
    </citation>
    <scope>NUCLEOTIDE SEQUENCE [LARGE SCALE MRNA]</scope>
    <source>
        <strain>Hereford</strain>
        <tissue>Testis</tissue>
    </source>
</reference>
<dbReference type="EMBL" id="AY911350">
    <property type="protein sequence ID" value="AAW82117.1"/>
    <property type="molecule type" value="mRNA"/>
</dbReference>
<dbReference type="EMBL" id="BC102749">
    <property type="protein sequence ID" value="AAI02750.1"/>
    <property type="molecule type" value="mRNA"/>
</dbReference>
<dbReference type="RefSeq" id="NP_001020513.1">
    <property type="nucleotide sequence ID" value="NM_001025342.2"/>
</dbReference>
<dbReference type="SMR" id="Q56JX8"/>
<dbReference type="FunCoup" id="Q56JX8">
    <property type="interactions" value="2215"/>
</dbReference>
<dbReference type="STRING" id="9913.ENSBTAP00000052105"/>
<dbReference type="PaxDb" id="9913-ENSBTAP00000052105"/>
<dbReference type="PeptideAtlas" id="Q56JX8"/>
<dbReference type="Ensembl" id="ENSBTAT00000055693.3">
    <property type="protein sequence ID" value="ENSBTAP00000052105.2"/>
    <property type="gene ID" value="ENSBTAG00000040308.3"/>
</dbReference>
<dbReference type="GeneID" id="535668"/>
<dbReference type="KEGG" id="bta:535668"/>
<dbReference type="CTD" id="6207"/>
<dbReference type="VEuPathDB" id="HostDB:ENSBTAG00000040308"/>
<dbReference type="eggNOG" id="KOG0400">
    <property type="taxonomic scope" value="Eukaryota"/>
</dbReference>
<dbReference type="GeneTree" id="ENSGT00390000017491"/>
<dbReference type="HOGENOM" id="CLU_090139_1_0_1"/>
<dbReference type="InParanoid" id="Q56JX8"/>
<dbReference type="OMA" id="MHTRRKG"/>
<dbReference type="OrthoDB" id="623277at2759"/>
<dbReference type="TreeFam" id="TF300190"/>
<dbReference type="Reactome" id="R-BTA-156827">
    <property type="pathway name" value="L13a-mediated translational silencing of Ceruloplasmin expression"/>
</dbReference>
<dbReference type="Reactome" id="R-BTA-1799339">
    <property type="pathway name" value="SRP-dependent cotranslational protein targeting to membrane"/>
</dbReference>
<dbReference type="Reactome" id="R-BTA-6791226">
    <property type="pathway name" value="Major pathway of rRNA processing in the nucleolus and cytosol"/>
</dbReference>
<dbReference type="Reactome" id="R-BTA-72649">
    <property type="pathway name" value="Translation initiation complex formation"/>
</dbReference>
<dbReference type="Reactome" id="R-BTA-72689">
    <property type="pathway name" value="Formation of a pool of free 40S subunits"/>
</dbReference>
<dbReference type="Reactome" id="R-BTA-72695">
    <property type="pathway name" value="Formation of the ternary complex, and subsequently, the 43S complex"/>
</dbReference>
<dbReference type="Reactome" id="R-BTA-72702">
    <property type="pathway name" value="Ribosomal scanning and start codon recognition"/>
</dbReference>
<dbReference type="Reactome" id="R-BTA-72706">
    <property type="pathway name" value="GTP hydrolysis and joining of the 60S ribosomal subunit"/>
</dbReference>
<dbReference type="Reactome" id="R-BTA-975956">
    <property type="pathway name" value="Nonsense Mediated Decay (NMD) independent of the Exon Junction Complex (EJC)"/>
</dbReference>
<dbReference type="Reactome" id="R-BTA-975957">
    <property type="pathway name" value="Nonsense Mediated Decay (NMD) enhanced by the Exon Junction Complex (EJC)"/>
</dbReference>
<dbReference type="CD-CODE" id="D7FE2080">
    <property type="entry name" value="Nucleolus"/>
</dbReference>
<dbReference type="Proteomes" id="UP000009136">
    <property type="component" value="Chromosome 15"/>
</dbReference>
<dbReference type="Bgee" id="ENSBTAG00000040308">
    <property type="expression patterns" value="Expressed in thymus and 105 other cell types or tissues"/>
</dbReference>
<dbReference type="GO" id="GO:0022627">
    <property type="term" value="C:cytosolic small ribosomal subunit"/>
    <property type="evidence" value="ECO:0000318"/>
    <property type="project" value="GO_Central"/>
</dbReference>
<dbReference type="GO" id="GO:0005730">
    <property type="term" value="C:nucleolus"/>
    <property type="evidence" value="ECO:0000318"/>
    <property type="project" value="GO_Central"/>
</dbReference>
<dbReference type="GO" id="GO:0032040">
    <property type="term" value="C:small-subunit processome"/>
    <property type="evidence" value="ECO:0000250"/>
    <property type="project" value="UniProtKB"/>
</dbReference>
<dbReference type="GO" id="GO:0070181">
    <property type="term" value="F:small ribosomal subunit rRNA binding"/>
    <property type="evidence" value="ECO:0000318"/>
    <property type="project" value="GO_Central"/>
</dbReference>
<dbReference type="GO" id="GO:0003735">
    <property type="term" value="F:structural constituent of ribosome"/>
    <property type="evidence" value="ECO:0000318"/>
    <property type="project" value="GO_Central"/>
</dbReference>
<dbReference type="GO" id="GO:0042274">
    <property type="term" value="P:ribosomal small subunit biogenesis"/>
    <property type="evidence" value="ECO:0000250"/>
    <property type="project" value="UniProtKB"/>
</dbReference>
<dbReference type="GO" id="GO:0006412">
    <property type="term" value="P:translation"/>
    <property type="evidence" value="ECO:0007669"/>
    <property type="project" value="InterPro"/>
</dbReference>
<dbReference type="CDD" id="cd00353">
    <property type="entry name" value="Ribosomal_S15p_S13e"/>
    <property type="match status" value="1"/>
</dbReference>
<dbReference type="FunFam" id="1.10.287.10:FF:000003">
    <property type="entry name" value="40S ribosomal protein S13"/>
    <property type="match status" value="1"/>
</dbReference>
<dbReference type="FunFam" id="4.10.860.130:FF:000001">
    <property type="entry name" value="40S ribosomal protein S13"/>
    <property type="match status" value="1"/>
</dbReference>
<dbReference type="Gene3D" id="4.10.860.130">
    <property type="match status" value="1"/>
</dbReference>
<dbReference type="Gene3D" id="1.10.287.10">
    <property type="entry name" value="S15/NS1, RNA-binding"/>
    <property type="match status" value="1"/>
</dbReference>
<dbReference type="HAMAP" id="MF_01343_A">
    <property type="entry name" value="Ribosomal_uS15_A"/>
    <property type="match status" value="1"/>
</dbReference>
<dbReference type="InterPro" id="IPR000589">
    <property type="entry name" value="Ribosomal_uS15"/>
</dbReference>
<dbReference type="InterPro" id="IPR023029">
    <property type="entry name" value="Ribosomal_uS15_arc_euk"/>
</dbReference>
<dbReference type="InterPro" id="IPR012606">
    <property type="entry name" value="Ribosomal_uS15_N"/>
</dbReference>
<dbReference type="InterPro" id="IPR009068">
    <property type="entry name" value="uS15_NS1_RNA-bd_sf"/>
</dbReference>
<dbReference type="NCBIfam" id="NF006331">
    <property type="entry name" value="PRK08561.1"/>
    <property type="match status" value="1"/>
</dbReference>
<dbReference type="PANTHER" id="PTHR11885">
    <property type="entry name" value="RIBOSOMAL PROTEIN S15P/S13E"/>
    <property type="match status" value="1"/>
</dbReference>
<dbReference type="PANTHER" id="PTHR11885:SF6">
    <property type="entry name" value="SMALL RIBOSOMAL SUBUNIT PROTEIN US15"/>
    <property type="match status" value="1"/>
</dbReference>
<dbReference type="Pfam" id="PF08069">
    <property type="entry name" value="Ribosomal_S13_N"/>
    <property type="match status" value="1"/>
</dbReference>
<dbReference type="Pfam" id="PF00312">
    <property type="entry name" value="Ribosomal_S15"/>
    <property type="match status" value="1"/>
</dbReference>
<dbReference type="SMART" id="SM01386">
    <property type="entry name" value="Ribosomal_S13_N"/>
    <property type="match status" value="1"/>
</dbReference>
<dbReference type="SMART" id="SM01387">
    <property type="entry name" value="Ribosomal_S15"/>
    <property type="match status" value="1"/>
</dbReference>
<dbReference type="SUPFAM" id="SSF47060">
    <property type="entry name" value="S15/NS1 RNA-binding domain"/>
    <property type="match status" value="1"/>
</dbReference>
<dbReference type="PROSITE" id="PS00362">
    <property type="entry name" value="RIBOSOMAL_S15"/>
    <property type="match status" value="1"/>
</dbReference>
<proteinExistence type="evidence at transcript level"/>